<dbReference type="EMBL" id="CP000673">
    <property type="protein sequence ID" value="EDK33459.1"/>
    <property type="molecule type" value="Genomic_DNA"/>
</dbReference>
<dbReference type="RefSeq" id="WP_012101806.1">
    <property type="nucleotide sequence ID" value="NC_009706.1"/>
</dbReference>
<dbReference type="SMR" id="A5N828"/>
<dbReference type="STRING" id="431943.CKL_1417"/>
<dbReference type="KEGG" id="ckl:CKL_1417"/>
<dbReference type="eggNOG" id="COG0052">
    <property type="taxonomic scope" value="Bacteria"/>
</dbReference>
<dbReference type="HOGENOM" id="CLU_040318_1_2_9"/>
<dbReference type="Proteomes" id="UP000002411">
    <property type="component" value="Chromosome"/>
</dbReference>
<dbReference type="GO" id="GO:0022627">
    <property type="term" value="C:cytosolic small ribosomal subunit"/>
    <property type="evidence" value="ECO:0007669"/>
    <property type="project" value="TreeGrafter"/>
</dbReference>
<dbReference type="GO" id="GO:0003735">
    <property type="term" value="F:structural constituent of ribosome"/>
    <property type="evidence" value="ECO:0007669"/>
    <property type="project" value="InterPro"/>
</dbReference>
<dbReference type="GO" id="GO:0006412">
    <property type="term" value="P:translation"/>
    <property type="evidence" value="ECO:0007669"/>
    <property type="project" value="UniProtKB-UniRule"/>
</dbReference>
<dbReference type="CDD" id="cd01425">
    <property type="entry name" value="RPS2"/>
    <property type="match status" value="1"/>
</dbReference>
<dbReference type="FunFam" id="1.10.287.610:FF:000001">
    <property type="entry name" value="30S ribosomal protein S2"/>
    <property type="match status" value="1"/>
</dbReference>
<dbReference type="Gene3D" id="3.40.50.10490">
    <property type="entry name" value="Glucose-6-phosphate isomerase like protein, domain 1"/>
    <property type="match status" value="1"/>
</dbReference>
<dbReference type="Gene3D" id="1.10.287.610">
    <property type="entry name" value="Helix hairpin bin"/>
    <property type="match status" value="1"/>
</dbReference>
<dbReference type="HAMAP" id="MF_00291_B">
    <property type="entry name" value="Ribosomal_uS2_B"/>
    <property type="match status" value="1"/>
</dbReference>
<dbReference type="InterPro" id="IPR001865">
    <property type="entry name" value="Ribosomal_uS2"/>
</dbReference>
<dbReference type="InterPro" id="IPR005706">
    <property type="entry name" value="Ribosomal_uS2_bac/mit/plastid"/>
</dbReference>
<dbReference type="InterPro" id="IPR018130">
    <property type="entry name" value="Ribosomal_uS2_CS"/>
</dbReference>
<dbReference type="InterPro" id="IPR023591">
    <property type="entry name" value="Ribosomal_uS2_flav_dom_sf"/>
</dbReference>
<dbReference type="NCBIfam" id="TIGR01011">
    <property type="entry name" value="rpsB_bact"/>
    <property type="match status" value="1"/>
</dbReference>
<dbReference type="PANTHER" id="PTHR12534">
    <property type="entry name" value="30S RIBOSOMAL PROTEIN S2 PROKARYOTIC AND ORGANELLAR"/>
    <property type="match status" value="1"/>
</dbReference>
<dbReference type="PANTHER" id="PTHR12534:SF0">
    <property type="entry name" value="SMALL RIBOSOMAL SUBUNIT PROTEIN US2M"/>
    <property type="match status" value="1"/>
</dbReference>
<dbReference type="Pfam" id="PF00318">
    <property type="entry name" value="Ribosomal_S2"/>
    <property type="match status" value="1"/>
</dbReference>
<dbReference type="PRINTS" id="PR00395">
    <property type="entry name" value="RIBOSOMALS2"/>
</dbReference>
<dbReference type="SUPFAM" id="SSF52313">
    <property type="entry name" value="Ribosomal protein S2"/>
    <property type="match status" value="1"/>
</dbReference>
<dbReference type="PROSITE" id="PS00962">
    <property type="entry name" value="RIBOSOMAL_S2_1"/>
    <property type="match status" value="1"/>
</dbReference>
<protein>
    <recommendedName>
        <fullName evidence="1">Small ribosomal subunit protein uS2</fullName>
    </recommendedName>
    <alternativeName>
        <fullName evidence="2">30S ribosomal protein S2</fullName>
    </alternativeName>
</protein>
<accession>A5N828</accession>
<evidence type="ECO:0000255" key="1">
    <source>
        <dbReference type="HAMAP-Rule" id="MF_00291"/>
    </source>
</evidence>
<evidence type="ECO:0000305" key="2"/>
<sequence>MSIISMKQLLESGVHFGHQTRRWNPKMASYIFTERNGIYIIDLQKTVRKIEEAYEFVKKIASEGKDILFIGTKKQAQEAIKEEAKRSNMHYVNNRWLGGMLTNFLTIRNRIGKLEELEKMEEDGTFEVLSKKEVIKLRNEKQKLERNLGGIKAMNAENVGALFVVDPRKEKNAISEAKILGIPVVAIVDTNCDPDEVDYVIPGNDDAIRAVKLITSKVADAVIEGRQGEQLAEE</sequence>
<organism>
    <name type="scientific">Clostridium kluyveri (strain ATCC 8527 / DSM 555 / NBRC 12016 / NCIMB 10680 / K1)</name>
    <dbReference type="NCBI Taxonomy" id="431943"/>
    <lineage>
        <taxon>Bacteria</taxon>
        <taxon>Bacillati</taxon>
        <taxon>Bacillota</taxon>
        <taxon>Clostridia</taxon>
        <taxon>Eubacteriales</taxon>
        <taxon>Clostridiaceae</taxon>
        <taxon>Clostridium</taxon>
    </lineage>
</organism>
<reference key="1">
    <citation type="journal article" date="2008" name="Proc. Natl. Acad. Sci. U.S.A.">
        <title>The genome of Clostridium kluyveri, a strict anaerobe with unique metabolic features.</title>
        <authorList>
            <person name="Seedorf H."/>
            <person name="Fricke W.F."/>
            <person name="Veith B."/>
            <person name="Brueggemann H."/>
            <person name="Liesegang H."/>
            <person name="Strittmatter A."/>
            <person name="Miethke M."/>
            <person name="Buckel W."/>
            <person name="Hinderberger J."/>
            <person name="Li F."/>
            <person name="Hagemeier C."/>
            <person name="Thauer R.K."/>
            <person name="Gottschalk G."/>
        </authorList>
    </citation>
    <scope>NUCLEOTIDE SEQUENCE [LARGE SCALE GENOMIC DNA]</scope>
    <source>
        <strain>ATCC 8527 / DSM 555 / NBRC 12016 / NCIMB 10680 / K1</strain>
    </source>
</reference>
<feature type="chain" id="PRO_1000078874" description="Small ribosomal subunit protein uS2">
    <location>
        <begin position="1"/>
        <end position="234"/>
    </location>
</feature>
<keyword id="KW-1185">Reference proteome</keyword>
<keyword id="KW-0687">Ribonucleoprotein</keyword>
<keyword id="KW-0689">Ribosomal protein</keyword>
<comment type="similarity">
    <text evidence="1">Belongs to the universal ribosomal protein uS2 family.</text>
</comment>
<name>RS2_CLOK5</name>
<proteinExistence type="inferred from homology"/>
<gene>
    <name evidence="1" type="primary">rpsB</name>
    <name type="ordered locus">CKL_1417</name>
</gene>